<proteinExistence type="inferred from homology"/>
<name>APT_FRAAA</name>
<feature type="chain" id="PRO_0000321364" description="Adenine phosphoribosyltransferase">
    <location>
        <begin position="1"/>
        <end position="189"/>
    </location>
</feature>
<comment type="function">
    <text evidence="1">Catalyzes a salvage reaction resulting in the formation of AMP, that is energically less costly than de novo synthesis.</text>
</comment>
<comment type="catalytic activity">
    <reaction evidence="1">
        <text>AMP + diphosphate = 5-phospho-alpha-D-ribose 1-diphosphate + adenine</text>
        <dbReference type="Rhea" id="RHEA:16609"/>
        <dbReference type="ChEBI" id="CHEBI:16708"/>
        <dbReference type="ChEBI" id="CHEBI:33019"/>
        <dbReference type="ChEBI" id="CHEBI:58017"/>
        <dbReference type="ChEBI" id="CHEBI:456215"/>
        <dbReference type="EC" id="2.4.2.7"/>
    </reaction>
</comment>
<comment type="pathway">
    <text evidence="1">Purine metabolism; AMP biosynthesis via salvage pathway; AMP from adenine: step 1/1.</text>
</comment>
<comment type="subunit">
    <text evidence="1">Homodimer.</text>
</comment>
<comment type="subcellular location">
    <subcellularLocation>
        <location evidence="1">Cytoplasm</location>
    </subcellularLocation>
</comment>
<comment type="similarity">
    <text evidence="1">Belongs to the purine/pyrimidine phosphoribosyltransferase family.</text>
</comment>
<organism>
    <name type="scientific">Frankia alni (strain DSM 45986 / CECT 9034 / ACN14a)</name>
    <dbReference type="NCBI Taxonomy" id="326424"/>
    <lineage>
        <taxon>Bacteria</taxon>
        <taxon>Bacillati</taxon>
        <taxon>Actinomycetota</taxon>
        <taxon>Actinomycetes</taxon>
        <taxon>Frankiales</taxon>
        <taxon>Frankiaceae</taxon>
        <taxon>Frankia</taxon>
    </lineage>
</organism>
<reference key="1">
    <citation type="journal article" date="2007" name="Genome Res.">
        <title>Genome characteristics of facultatively symbiotic Frankia sp. strains reflect host range and host plant biogeography.</title>
        <authorList>
            <person name="Normand P."/>
            <person name="Lapierre P."/>
            <person name="Tisa L.S."/>
            <person name="Gogarten J.P."/>
            <person name="Alloisio N."/>
            <person name="Bagnarol E."/>
            <person name="Bassi C.A."/>
            <person name="Berry A.M."/>
            <person name="Bickhart D.M."/>
            <person name="Choisne N."/>
            <person name="Couloux A."/>
            <person name="Cournoyer B."/>
            <person name="Cruveiller S."/>
            <person name="Daubin V."/>
            <person name="Demange N."/>
            <person name="Francino M.P."/>
            <person name="Goltsman E."/>
            <person name="Huang Y."/>
            <person name="Kopp O.R."/>
            <person name="Labarre L."/>
            <person name="Lapidus A."/>
            <person name="Lavire C."/>
            <person name="Marechal J."/>
            <person name="Martinez M."/>
            <person name="Mastronunzio J.E."/>
            <person name="Mullin B.C."/>
            <person name="Niemann J."/>
            <person name="Pujic P."/>
            <person name="Rawnsley T."/>
            <person name="Rouy Z."/>
            <person name="Schenowitz C."/>
            <person name="Sellstedt A."/>
            <person name="Tavares F."/>
            <person name="Tomkins J.P."/>
            <person name="Vallenet D."/>
            <person name="Valverde C."/>
            <person name="Wall L.G."/>
            <person name="Wang Y."/>
            <person name="Medigue C."/>
            <person name="Benson D.R."/>
        </authorList>
    </citation>
    <scope>NUCLEOTIDE SEQUENCE [LARGE SCALE GENOMIC DNA]</scope>
    <source>
        <strain>DSM 45986 / CECT 9034 / ACN14a</strain>
    </source>
</reference>
<gene>
    <name evidence="1" type="primary">apt</name>
    <name type="ordered locus">FRAAL2146</name>
</gene>
<keyword id="KW-0963">Cytoplasm</keyword>
<keyword id="KW-0328">Glycosyltransferase</keyword>
<keyword id="KW-0660">Purine salvage</keyword>
<keyword id="KW-1185">Reference proteome</keyword>
<keyword id="KW-0808">Transferase</keyword>
<evidence type="ECO:0000255" key="1">
    <source>
        <dbReference type="HAMAP-Rule" id="MF_00004"/>
    </source>
</evidence>
<dbReference type="EC" id="2.4.2.7" evidence="1"/>
<dbReference type="EMBL" id="CT573213">
    <property type="protein sequence ID" value="CAJ60795.1"/>
    <property type="molecule type" value="Genomic_DNA"/>
</dbReference>
<dbReference type="RefSeq" id="WP_011603311.1">
    <property type="nucleotide sequence ID" value="NC_008278.1"/>
</dbReference>
<dbReference type="SMR" id="Q0RNU1"/>
<dbReference type="STRING" id="326424.FRAAL2146"/>
<dbReference type="KEGG" id="fal:FRAAL2146"/>
<dbReference type="eggNOG" id="COG0503">
    <property type="taxonomic scope" value="Bacteria"/>
</dbReference>
<dbReference type="HOGENOM" id="CLU_063339_3_0_11"/>
<dbReference type="OrthoDB" id="9803963at2"/>
<dbReference type="UniPathway" id="UPA00588">
    <property type="reaction ID" value="UER00646"/>
</dbReference>
<dbReference type="Proteomes" id="UP000000657">
    <property type="component" value="Chromosome"/>
</dbReference>
<dbReference type="GO" id="GO:0005737">
    <property type="term" value="C:cytoplasm"/>
    <property type="evidence" value="ECO:0007669"/>
    <property type="project" value="UniProtKB-SubCell"/>
</dbReference>
<dbReference type="GO" id="GO:0002055">
    <property type="term" value="F:adenine binding"/>
    <property type="evidence" value="ECO:0007669"/>
    <property type="project" value="TreeGrafter"/>
</dbReference>
<dbReference type="GO" id="GO:0003999">
    <property type="term" value="F:adenine phosphoribosyltransferase activity"/>
    <property type="evidence" value="ECO:0007669"/>
    <property type="project" value="UniProtKB-UniRule"/>
</dbReference>
<dbReference type="GO" id="GO:0016208">
    <property type="term" value="F:AMP binding"/>
    <property type="evidence" value="ECO:0007669"/>
    <property type="project" value="TreeGrafter"/>
</dbReference>
<dbReference type="GO" id="GO:0006168">
    <property type="term" value="P:adenine salvage"/>
    <property type="evidence" value="ECO:0007669"/>
    <property type="project" value="InterPro"/>
</dbReference>
<dbReference type="GO" id="GO:0044209">
    <property type="term" value="P:AMP salvage"/>
    <property type="evidence" value="ECO:0007669"/>
    <property type="project" value="UniProtKB-UniRule"/>
</dbReference>
<dbReference type="GO" id="GO:0006166">
    <property type="term" value="P:purine ribonucleoside salvage"/>
    <property type="evidence" value="ECO:0007669"/>
    <property type="project" value="UniProtKB-KW"/>
</dbReference>
<dbReference type="CDD" id="cd06223">
    <property type="entry name" value="PRTases_typeI"/>
    <property type="match status" value="1"/>
</dbReference>
<dbReference type="FunFam" id="3.40.50.2020:FF:000021">
    <property type="entry name" value="Adenine phosphoribosyltransferase"/>
    <property type="match status" value="1"/>
</dbReference>
<dbReference type="Gene3D" id="3.40.50.2020">
    <property type="match status" value="1"/>
</dbReference>
<dbReference type="HAMAP" id="MF_00004">
    <property type="entry name" value="Aden_phosphoribosyltr"/>
    <property type="match status" value="1"/>
</dbReference>
<dbReference type="InterPro" id="IPR005764">
    <property type="entry name" value="Ade_phspho_trans"/>
</dbReference>
<dbReference type="InterPro" id="IPR000836">
    <property type="entry name" value="PRibTrfase_dom"/>
</dbReference>
<dbReference type="InterPro" id="IPR029057">
    <property type="entry name" value="PRTase-like"/>
</dbReference>
<dbReference type="InterPro" id="IPR050054">
    <property type="entry name" value="UPRTase/APRTase"/>
</dbReference>
<dbReference type="NCBIfam" id="TIGR01090">
    <property type="entry name" value="apt"/>
    <property type="match status" value="1"/>
</dbReference>
<dbReference type="NCBIfam" id="NF002634">
    <property type="entry name" value="PRK02304.1-3"/>
    <property type="match status" value="1"/>
</dbReference>
<dbReference type="NCBIfam" id="NF002636">
    <property type="entry name" value="PRK02304.1-5"/>
    <property type="match status" value="1"/>
</dbReference>
<dbReference type="PANTHER" id="PTHR32315">
    <property type="entry name" value="ADENINE PHOSPHORIBOSYLTRANSFERASE"/>
    <property type="match status" value="1"/>
</dbReference>
<dbReference type="PANTHER" id="PTHR32315:SF3">
    <property type="entry name" value="ADENINE PHOSPHORIBOSYLTRANSFERASE"/>
    <property type="match status" value="1"/>
</dbReference>
<dbReference type="Pfam" id="PF00156">
    <property type="entry name" value="Pribosyltran"/>
    <property type="match status" value="1"/>
</dbReference>
<dbReference type="SUPFAM" id="SSF53271">
    <property type="entry name" value="PRTase-like"/>
    <property type="match status" value="1"/>
</dbReference>
<dbReference type="PROSITE" id="PS00103">
    <property type="entry name" value="PUR_PYR_PR_TRANSFER"/>
    <property type="match status" value="1"/>
</dbReference>
<accession>Q0RNU1</accession>
<protein>
    <recommendedName>
        <fullName evidence="1">Adenine phosphoribosyltransferase</fullName>
        <shortName evidence="1">APRT</shortName>
        <ecNumber evidence="1">2.4.2.7</ecNumber>
    </recommendedName>
</protein>
<sequence>MTSIDEAAPGRSAASDAAADVLRGHIRDIQDWPQPGVVFKDITPLLSTPAAFGVVVGALVDVARERGATTIAGIEARGFLLAAPVADRLGAALVPIRKQGKLPGPTRSATYDLEYGTATIEIHADAVRPDERVLLVDDVLATGGTAAAAHGLLAGVGAEVVGLAVLMELSFLPGRERVAPLDVVPLLTI</sequence>